<organism>
    <name type="scientific">Staphylococcus aureus (strain NCTC 8325 / PS 47)</name>
    <dbReference type="NCBI Taxonomy" id="93061"/>
    <lineage>
        <taxon>Bacteria</taxon>
        <taxon>Bacillati</taxon>
        <taxon>Bacillota</taxon>
        <taxon>Bacilli</taxon>
        <taxon>Bacillales</taxon>
        <taxon>Staphylococcaceae</taxon>
        <taxon>Staphylococcus</taxon>
    </lineage>
</organism>
<protein>
    <recommendedName>
        <fullName evidence="1">N-acetyl-gamma-glutamyl-phosphate reductase</fullName>
        <shortName evidence="1">AGPR</shortName>
        <ecNumber evidence="1">1.2.1.38</ecNumber>
    </recommendedName>
    <alternativeName>
        <fullName evidence="1">N-acetyl-glutamate semialdehyde dehydrogenase</fullName>
        <shortName evidence="1">NAGSA dehydrogenase</shortName>
    </alternativeName>
</protein>
<sequence length="343" mass="37890">MIKVGIVGGSGYGAIELIRLLQTHPHVTIAHIYSHSKVDEPLKLTFPHLQHIMQHFEALTVDNNDCDVIFFATPAPVSKTCIPPLVEKGIHVIDLSGAFRIKNREIYEAYYKETAAAQDDLNHAIYSISEWQSFDNNGTKLISNPGCFPTATLLALHPLISEKIVDLSSIIIDAKTGVSGAGRSLSQRVHFSEMNENLSAYAIGNHKHKPEIEQYLSIIAGQDVSVIFTPHLVPMTRGILSTIYVKLSSEYTTESLHKLMTSYYANQPFVRIRDIGTFPTTKEVLGSNYCDIGIYVDETTQTAILVSVIDNLVKGASGQAIQNLNILYDFEVTTGLNQSPVYP</sequence>
<dbReference type="EC" id="1.2.1.38" evidence="1"/>
<dbReference type="EMBL" id="CP000253">
    <property type="protein sequence ID" value="ABD29329.1"/>
    <property type="molecule type" value="Genomic_DNA"/>
</dbReference>
<dbReference type="RefSeq" id="WP_000598483.1">
    <property type="nucleotide sequence ID" value="NZ_LS483365.1"/>
</dbReference>
<dbReference type="RefSeq" id="YP_498748.1">
    <property type="nucleotide sequence ID" value="NC_007795.1"/>
</dbReference>
<dbReference type="SMR" id="Q2G1H4"/>
<dbReference type="STRING" id="93061.SAOUHSC_00149"/>
<dbReference type="PaxDb" id="1280-SAXN108_0169"/>
<dbReference type="GeneID" id="3919857"/>
<dbReference type="KEGG" id="sao:SAOUHSC_00149"/>
<dbReference type="PATRIC" id="fig|93061.5.peg.140"/>
<dbReference type="eggNOG" id="COG0002">
    <property type="taxonomic scope" value="Bacteria"/>
</dbReference>
<dbReference type="HOGENOM" id="CLU_006384_0_1_9"/>
<dbReference type="OrthoDB" id="9801289at2"/>
<dbReference type="UniPathway" id="UPA00068">
    <property type="reaction ID" value="UER00108"/>
</dbReference>
<dbReference type="PRO" id="PR:Q2G1H4"/>
<dbReference type="Proteomes" id="UP000008816">
    <property type="component" value="Chromosome"/>
</dbReference>
<dbReference type="GO" id="GO:0005737">
    <property type="term" value="C:cytoplasm"/>
    <property type="evidence" value="ECO:0007669"/>
    <property type="project" value="UniProtKB-SubCell"/>
</dbReference>
<dbReference type="GO" id="GO:0003942">
    <property type="term" value="F:N-acetyl-gamma-glutamyl-phosphate reductase activity"/>
    <property type="evidence" value="ECO:0007669"/>
    <property type="project" value="UniProtKB-UniRule"/>
</dbReference>
<dbReference type="GO" id="GO:0051287">
    <property type="term" value="F:NAD binding"/>
    <property type="evidence" value="ECO:0007669"/>
    <property type="project" value="InterPro"/>
</dbReference>
<dbReference type="GO" id="GO:0070401">
    <property type="term" value="F:NADP+ binding"/>
    <property type="evidence" value="ECO:0007669"/>
    <property type="project" value="InterPro"/>
</dbReference>
<dbReference type="GO" id="GO:0006526">
    <property type="term" value="P:L-arginine biosynthetic process"/>
    <property type="evidence" value="ECO:0007669"/>
    <property type="project" value="UniProtKB-UniRule"/>
</dbReference>
<dbReference type="CDD" id="cd23934">
    <property type="entry name" value="AGPR_1_C"/>
    <property type="match status" value="1"/>
</dbReference>
<dbReference type="CDD" id="cd17895">
    <property type="entry name" value="AGPR_1_N"/>
    <property type="match status" value="1"/>
</dbReference>
<dbReference type="FunFam" id="3.30.360.10:FF:000014">
    <property type="entry name" value="N-acetyl-gamma-glutamyl-phosphate reductase"/>
    <property type="match status" value="1"/>
</dbReference>
<dbReference type="Gene3D" id="3.30.360.10">
    <property type="entry name" value="Dihydrodipicolinate Reductase, domain 2"/>
    <property type="match status" value="1"/>
</dbReference>
<dbReference type="Gene3D" id="3.40.50.720">
    <property type="entry name" value="NAD(P)-binding Rossmann-like Domain"/>
    <property type="match status" value="1"/>
</dbReference>
<dbReference type="HAMAP" id="MF_00150">
    <property type="entry name" value="ArgC_type1"/>
    <property type="match status" value="1"/>
</dbReference>
<dbReference type="InterPro" id="IPR023013">
    <property type="entry name" value="AGPR_AS"/>
</dbReference>
<dbReference type="InterPro" id="IPR000706">
    <property type="entry name" value="AGPR_type-1"/>
</dbReference>
<dbReference type="InterPro" id="IPR036291">
    <property type="entry name" value="NAD(P)-bd_dom_sf"/>
</dbReference>
<dbReference type="InterPro" id="IPR050085">
    <property type="entry name" value="NAGSA_dehydrogenase"/>
</dbReference>
<dbReference type="InterPro" id="IPR000534">
    <property type="entry name" value="Semialdehyde_DH_NAD-bd"/>
</dbReference>
<dbReference type="NCBIfam" id="TIGR01850">
    <property type="entry name" value="argC"/>
    <property type="match status" value="1"/>
</dbReference>
<dbReference type="PANTHER" id="PTHR32338:SF10">
    <property type="entry name" value="N-ACETYL-GAMMA-GLUTAMYL-PHOSPHATE REDUCTASE, CHLOROPLASTIC-RELATED"/>
    <property type="match status" value="1"/>
</dbReference>
<dbReference type="PANTHER" id="PTHR32338">
    <property type="entry name" value="N-ACETYL-GAMMA-GLUTAMYL-PHOSPHATE REDUCTASE, CHLOROPLASTIC-RELATED-RELATED"/>
    <property type="match status" value="1"/>
</dbReference>
<dbReference type="Pfam" id="PF01118">
    <property type="entry name" value="Semialdhyde_dh"/>
    <property type="match status" value="1"/>
</dbReference>
<dbReference type="Pfam" id="PF22698">
    <property type="entry name" value="Semialdhyde_dhC_1"/>
    <property type="match status" value="1"/>
</dbReference>
<dbReference type="SMART" id="SM00859">
    <property type="entry name" value="Semialdhyde_dh"/>
    <property type="match status" value="1"/>
</dbReference>
<dbReference type="SUPFAM" id="SSF55347">
    <property type="entry name" value="Glyceraldehyde-3-phosphate dehydrogenase-like, C-terminal domain"/>
    <property type="match status" value="1"/>
</dbReference>
<dbReference type="SUPFAM" id="SSF51735">
    <property type="entry name" value="NAD(P)-binding Rossmann-fold domains"/>
    <property type="match status" value="1"/>
</dbReference>
<dbReference type="PROSITE" id="PS01224">
    <property type="entry name" value="ARGC"/>
    <property type="match status" value="1"/>
</dbReference>
<comment type="function">
    <text evidence="1">Catalyzes the NADPH-dependent reduction of N-acetyl-5-glutamyl phosphate to yield N-acetyl-L-glutamate 5-semialdehyde.</text>
</comment>
<comment type="catalytic activity">
    <reaction evidence="1">
        <text>N-acetyl-L-glutamate 5-semialdehyde + phosphate + NADP(+) = N-acetyl-L-glutamyl 5-phosphate + NADPH + H(+)</text>
        <dbReference type="Rhea" id="RHEA:21588"/>
        <dbReference type="ChEBI" id="CHEBI:15378"/>
        <dbReference type="ChEBI" id="CHEBI:29123"/>
        <dbReference type="ChEBI" id="CHEBI:43474"/>
        <dbReference type="ChEBI" id="CHEBI:57783"/>
        <dbReference type="ChEBI" id="CHEBI:57936"/>
        <dbReference type="ChEBI" id="CHEBI:58349"/>
        <dbReference type="EC" id="1.2.1.38"/>
    </reaction>
</comment>
<comment type="pathway">
    <text evidence="1">Amino-acid biosynthesis; L-arginine biosynthesis; N(2)-acetyl-L-ornithine from L-glutamate: step 3/4.</text>
</comment>
<comment type="subcellular location">
    <subcellularLocation>
        <location evidence="1">Cytoplasm</location>
    </subcellularLocation>
</comment>
<comment type="similarity">
    <text evidence="1">Belongs to the NAGSA dehydrogenase family. Type 1 subfamily.</text>
</comment>
<reference key="1">
    <citation type="book" date="2006" name="Gram positive pathogens, 2nd edition">
        <title>The Staphylococcus aureus NCTC 8325 genome.</title>
        <editorList>
            <person name="Fischetti V."/>
            <person name="Novick R."/>
            <person name="Ferretti J."/>
            <person name="Portnoy D."/>
            <person name="Rood J."/>
        </editorList>
        <authorList>
            <person name="Gillaspy A.F."/>
            <person name="Worrell V."/>
            <person name="Orvis J."/>
            <person name="Roe B.A."/>
            <person name="Dyer D.W."/>
            <person name="Iandolo J.J."/>
        </authorList>
    </citation>
    <scope>NUCLEOTIDE SEQUENCE [LARGE SCALE GENOMIC DNA]</scope>
    <source>
        <strain>NCTC 8325 / PS 47</strain>
    </source>
</reference>
<feature type="chain" id="PRO_1000011067" description="N-acetyl-gamma-glutamyl-phosphate reductase">
    <location>
        <begin position="1"/>
        <end position="343"/>
    </location>
</feature>
<feature type="active site" evidence="1">
    <location>
        <position position="147"/>
    </location>
</feature>
<proteinExistence type="inferred from homology"/>
<name>ARGC_STAA8</name>
<gene>
    <name evidence="1" type="primary">argC</name>
    <name type="ordered locus">SAOUHSC_00149</name>
</gene>
<keyword id="KW-0028">Amino-acid biosynthesis</keyword>
<keyword id="KW-0055">Arginine biosynthesis</keyword>
<keyword id="KW-0963">Cytoplasm</keyword>
<keyword id="KW-0521">NADP</keyword>
<keyword id="KW-0560">Oxidoreductase</keyword>
<keyword id="KW-1185">Reference proteome</keyword>
<evidence type="ECO:0000255" key="1">
    <source>
        <dbReference type="HAMAP-Rule" id="MF_00150"/>
    </source>
</evidence>
<accession>Q2G1H4</accession>